<protein>
    <recommendedName>
        <fullName evidence="1">Undecaprenyl-diphosphatase</fullName>
        <ecNumber evidence="1">3.6.1.27</ecNumber>
    </recommendedName>
    <alternativeName>
        <fullName evidence="1">Bacitracin resistance protein</fullName>
    </alternativeName>
    <alternativeName>
        <fullName evidence="1">Undecaprenyl pyrophosphate phosphatase</fullName>
    </alternativeName>
</protein>
<dbReference type="EC" id="3.6.1.27" evidence="1"/>
<dbReference type="EMBL" id="CR936503">
    <property type="protein sequence ID" value="CAI55743.1"/>
    <property type="molecule type" value="Genomic_DNA"/>
</dbReference>
<dbReference type="SMR" id="Q38VP0"/>
<dbReference type="STRING" id="314315.LCA_1441"/>
<dbReference type="KEGG" id="lsa:LCA_1441"/>
<dbReference type="eggNOG" id="COG1968">
    <property type="taxonomic scope" value="Bacteria"/>
</dbReference>
<dbReference type="HOGENOM" id="CLU_060296_2_0_9"/>
<dbReference type="OrthoDB" id="9808289at2"/>
<dbReference type="Proteomes" id="UP000002707">
    <property type="component" value="Chromosome"/>
</dbReference>
<dbReference type="GO" id="GO:0005886">
    <property type="term" value="C:plasma membrane"/>
    <property type="evidence" value="ECO:0007669"/>
    <property type="project" value="UniProtKB-SubCell"/>
</dbReference>
<dbReference type="GO" id="GO:0050380">
    <property type="term" value="F:undecaprenyl-diphosphatase activity"/>
    <property type="evidence" value="ECO:0007669"/>
    <property type="project" value="UniProtKB-UniRule"/>
</dbReference>
<dbReference type="GO" id="GO:0071555">
    <property type="term" value="P:cell wall organization"/>
    <property type="evidence" value="ECO:0007669"/>
    <property type="project" value="UniProtKB-KW"/>
</dbReference>
<dbReference type="GO" id="GO:0009252">
    <property type="term" value="P:peptidoglycan biosynthetic process"/>
    <property type="evidence" value="ECO:0007669"/>
    <property type="project" value="UniProtKB-KW"/>
</dbReference>
<dbReference type="GO" id="GO:0008360">
    <property type="term" value="P:regulation of cell shape"/>
    <property type="evidence" value="ECO:0007669"/>
    <property type="project" value="UniProtKB-KW"/>
</dbReference>
<dbReference type="GO" id="GO:0046677">
    <property type="term" value="P:response to antibiotic"/>
    <property type="evidence" value="ECO:0007669"/>
    <property type="project" value="UniProtKB-UniRule"/>
</dbReference>
<dbReference type="HAMAP" id="MF_01006">
    <property type="entry name" value="Undec_diphosphatase"/>
    <property type="match status" value="1"/>
</dbReference>
<dbReference type="InterPro" id="IPR003824">
    <property type="entry name" value="UppP"/>
</dbReference>
<dbReference type="NCBIfam" id="NF001389">
    <property type="entry name" value="PRK00281.1-2"/>
    <property type="match status" value="1"/>
</dbReference>
<dbReference type="NCBIfam" id="NF001390">
    <property type="entry name" value="PRK00281.1-4"/>
    <property type="match status" value="1"/>
</dbReference>
<dbReference type="NCBIfam" id="NF001391">
    <property type="entry name" value="PRK00281.1-5"/>
    <property type="match status" value="1"/>
</dbReference>
<dbReference type="NCBIfam" id="TIGR00753">
    <property type="entry name" value="undec_PP_bacA"/>
    <property type="match status" value="1"/>
</dbReference>
<dbReference type="PANTHER" id="PTHR30622">
    <property type="entry name" value="UNDECAPRENYL-DIPHOSPHATASE"/>
    <property type="match status" value="1"/>
</dbReference>
<dbReference type="PANTHER" id="PTHR30622:SF3">
    <property type="entry name" value="UNDECAPRENYL-DIPHOSPHATASE"/>
    <property type="match status" value="1"/>
</dbReference>
<dbReference type="Pfam" id="PF02673">
    <property type="entry name" value="BacA"/>
    <property type="match status" value="1"/>
</dbReference>
<comment type="function">
    <text evidence="1">Catalyzes the dephosphorylation of undecaprenyl diphosphate (UPP). Confers resistance to bacitracin.</text>
</comment>
<comment type="catalytic activity">
    <reaction evidence="1">
        <text>di-trans,octa-cis-undecaprenyl diphosphate + H2O = di-trans,octa-cis-undecaprenyl phosphate + phosphate + H(+)</text>
        <dbReference type="Rhea" id="RHEA:28094"/>
        <dbReference type="ChEBI" id="CHEBI:15377"/>
        <dbReference type="ChEBI" id="CHEBI:15378"/>
        <dbReference type="ChEBI" id="CHEBI:43474"/>
        <dbReference type="ChEBI" id="CHEBI:58405"/>
        <dbReference type="ChEBI" id="CHEBI:60392"/>
        <dbReference type="EC" id="3.6.1.27"/>
    </reaction>
</comment>
<comment type="subcellular location">
    <subcellularLocation>
        <location evidence="1">Cell membrane</location>
        <topology evidence="1">Multi-pass membrane protein</topology>
    </subcellularLocation>
</comment>
<comment type="miscellaneous">
    <text>Bacitracin is thought to be involved in the inhibition of peptidoglycan synthesis by sequestering undecaprenyl diphosphate, thereby reducing the pool of lipid carrier available.</text>
</comment>
<comment type="similarity">
    <text evidence="1">Belongs to the UppP family.</text>
</comment>
<reference key="1">
    <citation type="journal article" date="2005" name="Nat. Biotechnol.">
        <title>The complete genome sequence of the meat-borne lactic acid bacterium Lactobacillus sakei 23K.</title>
        <authorList>
            <person name="Chaillou S."/>
            <person name="Champomier-Verges M.-C."/>
            <person name="Cornet M."/>
            <person name="Crutz-Le Coq A.-M."/>
            <person name="Dudez A.-M."/>
            <person name="Martin V."/>
            <person name="Beaufils S."/>
            <person name="Darbon-Rongere E."/>
            <person name="Bossy R."/>
            <person name="Loux V."/>
            <person name="Zagorec M."/>
        </authorList>
    </citation>
    <scope>NUCLEOTIDE SEQUENCE [LARGE SCALE GENOMIC DNA]</scope>
    <source>
        <strain>23K</strain>
    </source>
</reference>
<accession>Q38VP0</accession>
<sequence length="275" mass="30881">MLTLNVIKAIILGIVEGFTEWLPISSTGHLVLVGSVLKMGESKAFMDMFNYVIQFGAILAVVVLYFHKLNPFSPQKNQLEQKQTWTLWFKVILAVIPSVIIGFPLNDWMDEHLMQNWVVASMLILYGILFIVIENRNKQRTPKFADLNTLPWLTAFWIGCFQALSIIPGTSRSGATILGAILIGTSRFVGAEFSFFMAIPTMIGVSILKIGKFFYQGNTFTGDQSIILLVGMVVSFIISIISIKFLMGYIKKNDFKVFGWYRIILGVLVLGAMFL</sequence>
<gene>
    <name evidence="1" type="primary">uppP</name>
    <name type="synonym">bacA</name>
    <name type="ordered locus">LCA_1441</name>
</gene>
<organism>
    <name type="scientific">Latilactobacillus sakei subsp. sakei (strain 23K)</name>
    <name type="common">Lactobacillus sakei subsp. sakei</name>
    <dbReference type="NCBI Taxonomy" id="314315"/>
    <lineage>
        <taxon>Bacteria</taxon>
        <taxon>Bacillati</taxon>
        <taxon>Bacillota</taxon>
        <taxon>Bacilli</taxon>
        <taxon>Lactobacillales</taxon>
        <taxon>Lactobacillaceae</taxon>
        <taxon>Latilactobacillus</taxon>
    </lineage>
</organism>
<proteinExistence type="inferred from homology"/>
<evidence type="ECO:0000255" key="1">
    <source>
        <dbReference type="HAMAP-Rule" id="MF_01006"/>
    </source>
</evidence>
<name>UPPP_LATSS</name>
<keyword id="KW-0046">Antibiotic resistance</keyword>
<keyword id="KW-1003">Cell membrane</keyword>
<keyword id="KW-0133">Cell shape</keyword>
<keyword id="KW-0961">Cell wall biogenesis/degradation</keyword>
<keyword id="KW-0378">Hydrolase</keyword>
<keyword id="KW-0472">Membrane</keyword>
<keyword id="KW-0573">Peptidoglycan synthesis</keyword>
<keyword id="KW-1185">Reference proteome</keyword>
<keyword id="KW-0812">Transmembrane</keyword>
<keyword id="KW-1133">Transmembrane helix</keyword>
<feature type="chain" id="PRO_0000227620" description="Undecaprenyl-diphosphatase">
    <location>
        <begin position="1"/>
        <end position="275"/>
    </location>
</feature>
<feature type="transmembrane region" description="Helical" evidence="1">
    <location>
        <begin position="4"/>
        <end position="24"/>
    </location>
</feature>
<feature type="transmembrane region" description="Helical" evidence="1">
    <location>
        <begin position="44"/>
        <end position="64"/>
    </location>
</feature>
<feature type="transmembrane region" description="Helical" evidence="1">
    <location>
        <begin position="85"/>
        <end position="105"/>
    </location>
</feature>
<feature type="transmembrane region" description="Helical" evidence="1">
    <location>
        <begin position="113"/>
        <end position="133"/>
    </location>
</feature>
<feature type="transmembrane region" description="Helical" evidence="1">
    <location>
        <begin position="149"/>
        <end position="169"/>
    </location>
</feature>
<feature type="transmembrane region" description="Helical" evidence="1">
    <location>
        <begin position="188"/>
        <end position="208"/>
    </location>
</feature>
<feature type="transmembrane region" description="Helical" evidence="1">
    <location>
        <begin position="226"/>
        <end position="246"/>
    </location>
</feature>
<feature type="transmembrane region" description="Helical" evidence="1">
    <location>
        <begin position="255"/>
        <end position="275"/>
    </location>
</feature>